<keyword id="KW-0108">Calcium channel impairing toxin</keyword>
<keyword id="KW-0903">Direct protein sequencing</keyword>
<keyword id="KW-1015">Disulfide bond</keyword>
<keyword id="KW-0872">Ion channel impairing toxin</keyword>
<keyword id="KW-0528">Neurotoxin</keyword>
<keyword id="KW-0964">Secreted</keyword>
<keyword id="KW-0800">Toxin</keyword>
<keyword id="KW-1218">Voltage-gated calcium channel impairing toxin</keyword>
<name>TXP1_BRAAI</name>
<evidence type="ECO:0000250" key="1">
    <source>
        <dbReference type="UniProtKB" id="P0DL81"/>
    </source>
</evidence>
<evidence type="ECO:0000250" key="2">
    <source>
        <dbReference type="UniProtKB" id="P85504"/>
    </source>
</evidence>
<evidence type="ECO:0000269" key="3">
    <source>
    </source>
</evidence>
<evidence type="ECO:0000303" key="4">
    <source>
    </source>
</evidence>
<evidence type="ECO:0000305" key="5"/>
<evidence type="ECO:0000305" key="6">
    <source>
    </source>
</evidence>
<comment type="function">
    <text evidence="1 3">Inhibits voltage-gated calcium channels (Cav) in rat cerebellar granule cells (By similarity). Has insecticidal activity to crickets (Acheta domesticus) (PubMed:19374957). Is not toxic to mice (PubMed:19374957).</text>
</comment>
<comment type="subcellular location">
    <subcellularLocation>
        <location evidence="3">Secreted</location>
    </subcellularLocation>
</comment>
<comment type="tissue specificity">
    <text evidence="6">Expressed by the venom gland.</text>
</comment>
<comment type="mass spectrometry" mass="4406.43" method="Electrospray" evidence="3"/>
<comment type="toxic dose">
    <text evidence="3">LD(50) is 10.8 +- 1.4 mg/kg in juvenile house crickets (Acheta domesticus).</text>
</comment>
<comment type="similarity">
    <text evidence="5">Belongs to the neurotoxin 12 (Hwtx-2) family. 06 (TXP1) subfamily.</text>
</comment>
<proteinExistence type="evidence at protein level"/>
<protein>
    <recommendedName>
        <fullName evidence="5">Omega-theraphotoxin-Ba1a</fullName>
        <shortName evidence="5">Omega-TRTX-Ba1a</shortName>
    </recommendedName>
    <alternativeName>
        <fullName evidence="4">Ba1</fullName>
    </alternativeName>
</protein>
<sequence length="39" mass="4412">ILECVFSCDIKKEGKPCKPKGEKKCTGGWRCKIKLCLKI</sequence>
<dbReference type="BMRB" id="P85497"/>
<dbReference type="SMR" id="P85497"/>
<dbReference type="ArachnoServer" id="AS000397">
    <property type="toxin name" value="omega-theraphotoxin-Ba1a"/>
</dbReference>
<dbReference type="GO" id="GO:0005576">
    <property type="term" value="C:extracellular region"/>
    <property type="evidence" value="ECO:0007669"/>
    <property type="project" value="UniProtKB-SubCell"/>
</dbReference>
<dbReference type="GO" id="GO:0005246">
    <property type="term" value="F:calcium channel regulator activity"/>
    <property type="evidence" value="ECO:0007669"/>
    <property type="project" value="UniProtKB-KW"/>
</dbReference>
<dbReference type="GO" id="GO:0090729">
    <property type="term" value="F:toxin activity"/>
    <property type="evidence" value="ECO:0007669"/>
    <property type="project" value="UniProtKB-KW"/>
</dbReference>
<dbReference type="InterPro" id="IPR012625">
    <property type="entry name" value="Hwtx-2-like"/>
</dbReference>
<dbReference type="Pfam" id="PF08089">
    <property type="entry name" value="Toxin_20"/>
    <property type="match status" value="1"/>
</dbReference>
<dbReference type="SUPFAM" id="SSF57059">
    <property type="entry name" value="omega toxin-like"/>
    <property type="match status" value="1"/>
</dbReference>
<dbReference type="PROSITE" id="PS60022">
    <property type="entry name" value="HWTX_2"/>
    <property type="match status" value="1"/>
</dbReference>
<reference key="1">
    <citation type="journal article" date="2009" name="Biochim. Biophys. Acta">
        <title>Insecticidal peptides from the theraposid spider Brachypelma albiceps: an NMR-based model of Ba2.</title>
        <authorList>
            <person name="Corzo G."/>
            <person name="Bernard C."/>
            <person name="Clement H."/>
            <person name="Villegas E."/>
            <person name="Bosmans F."/>
            <person name="Tytgat J."/>
            <person name="Possani L.D."/>
            <person name="Darbon H."/>
            <person name="Alagon A."/>
        </authorList>
    </citation>
    <scope>PROTEIN SEQUENCE</scope>
    <scope>FUNCTION</scope>
    <scope>SUBCELLULAR LOCATION</scope>
    <scope>MASS SPECTROMETRY</scope>
    <scope>TOXIC DOSE</scope>
    <source>
        <tissue>Venom</tissue>
    </source>
</reference>
<feature type="peptide" id="PRO_0000332947" description="Omega-theraphotoxin-Ba1a" evidence="3">
    <location>
        <begin position="1"/>
        <end position="39"/>
    </location>
</feature>
<feature type="disulfide bond" evidence="2">
    <location>
        <begin position="4"/>
        <end position="25"/>
    </location>
</feature>
<feature type="disulfide bond" evidence="2">
    <location>
        <begin position="8"/>
        <end position="31"/>
    </location>
</feature>
<feature type="disulfide bond" evidence="2">
    <location>
        <begin position="17"/>
        <end position="36"/>
    </location>
</feature>
<organism>
    <name type="scientific">Brachypelma albiceps</name>
    <name type="common">Mexican golden redrump tarantula</name>
    <name type="synonym">Brachypelma ruhnaui</name>
    <dbReference type="NCBI Taxonomy" id="503929"/>
    <lineage>
        <taxon>Eukaryota</taxon>
        <taxon>Metazoa</taxon>
        <taxon>Ecdysozoa</taxon>
        <taxon>Arthropoda</taxon>
        <taxon>Chelicerata</taxon>
        <taxon>Arachnida</taxon>
        <taxon>Araneae</taxon>
        <taxon>Mygalomorphae</taxon>
        <taxon>Theraphosidae</taxon>
        <taxon>Brachypelma</taxon>
    </lineage>
</organism>
<accession>P85497</accession>